<keyword id="KW-1185">Reference proteome</keyword>
<sequence>MNPNPFLPRKALSPTALNQNLATHRRRPKSKNWTSVNKIKYDSELLLQYLYEGFGADRPYSDINVIKVYKVKVKKTGASILAHYFAHVSTSTGYEFEFHPGSQPRTFQTVHTDGLIIKVHIMCDACCKAELRRYIEGENGFNVAFRNCESILCRRVSFQTLLLGSVILLLLFNVENFSALNLLVILLILLALFCHNNYIISNPHVVFCNHKNALKNHE</sequence>
<organism>
    <name type="scientific">Orgyia pseudotsugata multicapsid polyhedrosis virus</name>
    <name type="common">OpMNPV</name>
    <dbReference type="NCBI Taxonomy" id="262177"/>
    <lineage>
        <taxon>Viruses</taxon>
        <taxon>Viruses incertae sedis</taxon>
        <taxon>Naldaviricetes</taxon>
        <taxon>Lefavirales</taxon>
        <taxon>Baculoviridae</taxon>
        <taxon>Alphabaculovirus</taxon>
        <taxon>Alphabaculovirus orpseudotsugatae</taxon>
    </lineage>
</organism>
<feature type="chain" id="PRO_0000133023" description="Uncharacterized 24.9 kDa protein">
    <location>
        <begin position="1"/>
        <end position="218"/>
    </location>
</feature>
<reference key="1">
    <citation type="journal article" date="1997" name="Virology">
        <title>The sequence of the Orgyia pseudotsugata multinucleocapsid nuclear polyhedrosis virus genome.</title>
        <authorList>
            <person name="Ahrens C.H."/>
            <person name="Russell R.R."/>
            <person name="Funk C.J."/>
            <person name="Evans J."/>
            <person name="Harwood S."/>
            <person name="Rohrmann G.F."/>
        </authorList>
    </citation>
    <scope>NUCLEOTIDE SEQUENCE [LARGE SCALE GENOMIC DNA]</scope>
</reference>
<name>Y081_NPVOP</name>
<organismHost>
    <name type="scientific">Orgyia pseudotsugata</name>
    <name type="common">Douglas-fir tussock moth</name>
    <dbReference type="NCBI Taxonomy" id="33414"/>
</organismHost>
<accession>O10334</accession>
<dbReference type="EMBL" id="U75930">
    <property type="protein sequence ID" value="AAC59083.1"/>
    <property type="molecule type" value="Genomic_DNA"/>
</dbReference>
<dbReference type="RefSeq" id="NP_046240.1">
    <property type="nucleotide sequence ID" value="NC_001875.2"/>
</dbReference>
<dbReference type="KEGG" id="vg:911967"/>
<dbReference type="OrthoDB" id="10138at10239"/>
<dbReference type="Proteomes" id="UP000009248">
    <property type="component" value="Genome"/>
</dbReference>
<dbReference type="InterPro" id="IPR008563">
    <property type="entry name" value="AcMNPV_AC81"/>
</dbReference>
<dbReference type="Pfam" id="PF05820">
    <property type="entry name" value="Ac81"/>
    <property type="match status" value="1"/>
</dbReference>
<gene>
    <name type="ORF">ORF84</name>
</gene>
<protein>
    <recommendedName>
        <fullName>Uncharacterized 24.9 kDa protein</fullName>
    </recommendedName>
</protein>
<proteinExistence type="predicted"/>